<gene>
    <name evidence="1" type="primary">atpH</name>
    <name type="ordered locus">RL4410</name>
</gene>
<protein>
    <recommendedName>
        <fullName evidence="1">ATP synthase subunit delta</fullName>
    </recommendedName>
    <alternativeName>
        <fullName evidence="1">ATP synthase F(1) sector subunit delta</fullName>
    </alternativeName>
    <alternativeName>
        <fullName evidence="1">F-type ATPase subunit delta</fullName>
        <shortName evidence="1">F-ATPase subunit delta</shortName>
    </alternativeName>
</protein>
<feature type="chain" id="PRO_0000371091" description="ATP synthase subunit delta">
    <location>
        <begin position="1"/>
        <end position="188"/>
    </location>
</feature>
<organism>
    <name type="scientific">Rhizobium johnstonii (strain DSM 114642 / LMG 32736 / 3841)</name>
    <name type="common">Rhizobium leguminosarum bv. viciae</name>
    <dbReference type="NCBI Taxonomy" id="216596"/>
    <lineage>
        <taxon>Bacteria</taxon>
        <taxon>Pseudomonadati</taxon>
        <taxon>Pseudomonadota</taxon>
        <taxon>Alphaproteobacteria</taxon>
        <taxon>Hyphomicrobiales</taxon>
        <taxon>Rhizobiaceae</taxon>
        <taxon>Rhizobium/Agrobacterium group</taxon>
        <taxon>Rhizobium</taxon>
        <taxon>Rhizobium johnstonii</taxon>
    </lineage>
</organism>
<evidence type="ECO:0000255" key="1">
    <source>
        <dbReference type="HAMAP-Rule" id="MF_01416"/>
    </source>
</evidence>
<sequence length="188" mass="19984">MPVADTSQLTSGVAERYASSLFELALEQGAVDSVTADLDHFQAMLDESADLKRFVASPVFSAEDQLKAIVAISEKAGISGFFANFLKVVARNRRLFALPGMIKAFRIIAANHRGEISAEVTSAHALSQAQETELKVALKGVTGKDVTIAVTVDPSILGGLIVKVGSRQIDTSLRTKLSTLKLALKEVG</sequence>
<keyword id="KW-0066">ATP synthesis</keyword>
<keyword id="KW-0997">Cell inner membrane</keyword>
<keyword id="KW-1003">Cell membrane</keyword>
<keyword id="KW-0139">CF(1)</keyword>
<keyword id="KW-0375">Hydrogen ion transport</keyword>
<keyword id="KW-0406">Ion transport</keyword>
<keyword id="KW-0472">Membrane</keyword>
<keyword id="KW-0813">Transport</keyword>
<proteinExistence type="inferred from homology"/>
<name>ATPD_RHIJ3</name>
<comment type="function">
    <text evidence="1">F(1)F(0) ATP synthase produces ATP from ADP in the presence of a proton or sodium gradient. F-type ATPases consist of two structural domains, F(1) containing the extramembraneous catalytic core and F(0) containing the membrane proton channel, linked together by a central stalk and a peripheral stalk. During catalysis, ATP synthesis in the catalytic domain of F(1) is coupled via a rotary mechanism of the central stalk subunits to proton translocation.</text>
</comment>
<comment type="function">
    <text evidence="1">This protein is part of the stalk that links CF(0) to CF(1). It either transmits conformational changes from CF(0) to CF(1) or is implicated in proton conduction.</text>
</comment>
<comment type="subunit">
    <text evidence="1">F-type ATPases have 2 components, F(1) - the catalytic core - and F(0) - the membrane proton channel. F(1) has five subunits: alpha(3), beta(3), gamma(1), delta(1), epsilon(1). F(0) has three main subunits: a(1), b(2) and c(10-14). The alpha and beta chains form an alternating ring which encloses part of the gamma chain. F(1) is attached to F(0) by a central stalk formed by the gamma and epsilon chains, while a peripheral stalk is formed by the delta and b chains.</text>
</comment>
<comment type="subcellular location">
    <subcellularLocation>
        <location evidence="1">Cell inner membrane</location>
        <topology evidence="1">Peripheral membrane protein</topology>
    </subcellularLocation>
</comment>
<comment type="similarity">
    <text evidence="1">Belongs to the ATPase delta chain family.</text>
</comment>
<dbReference type="EMBL" id="AM236080">
    <property type="protein sequence ID" value="CAK09896.1"/>
    <property type="molecule type" value="Genomic_DNA"/>
</dbReference>
<dbReference type="SMR" id="Q1MAY9"/>
<dbReference type="EnsemblBacteria" id="CAK09896">
    <property type="protein sequence ID" value="CAK09896"/>
    <property type="gene ID" value="RL4410"/>
</dbReference>
<dbReference type="KEGG" id="rle:RL4410"/>
<dbReference type="eggNOG" id="COG0712">
    <property type="taxonomic scope" value="Bacteria"/>
</dbReference>
<dbReference type="HOGENOM" id="CLU_085114_0_1_5"/>
<dbReference type="Proteomes" id="UP000006575">
    <property type="component" value="Chromosome"/>
</dbReference>
<dbReference type="GO" id="GO:0005886">
    <property type="term" value="C:plasma membrane"/>
    <property type="evidence" value="ECO:0007669"/>
    <property type="project" value="UniProtKB-SubCell"/>
</dbReference>
<dbReference type="GO" id="GO:0045259">
    <property type="term" value="C:proton-transporting ATP synthase complex"/>
    <property type="evidence" value="ECO:0007669"/>
    <property type="project" value="UniProtKB-KW"/>
</dbReference>
<dbReference type="GO" id="GO:0046933">
    <property type="term" value="F:proton-transporting ATP synthase activity, rotational mechanism"/>
    <property type="evidence" value="ECO:0007669"/>
    <property type="project" value="UniProtKB-UniRule"/>
</dbReference>
<dbReference type="Gene3D" id="1.10.520.20">
    <property type="entry name" value="N-terminal domain of the delta subunit of the F1F0-ATP synthase"/>
    <property type="match status" value="1"/>
</dbReference>
<dbReference type="HAMAP" id="MF_01416">
    <property type="entry name" value="ATP_synth_delta_bact"/>
    <property type="match status" value="1"/>
</dbReference>
<dbReference type="InterPro" id="IPR026015">
    <property type="entry name" value="ATP_synth_OSCP/delta_N_sf"/>
</dbReference>
<dbReference type="InterPro" id="IPR020781">
    <property type="entry name" value="ATPase_OSCP/d_CS"/>
</dbReference>
<dbReference type="InterPro" id="IPR000711">
    <property type="entry name" value="ATPase_OSCP/dsu"/>
</dbReference>
<dbReference type="NCBIfam" id="TIGR01145">
    <property type="entry name" value="ATP_synt_delta"/>
    <property type="match status" value="1"/>
</dbReference>
<dbReference type="NCBIfam" id="NF004402">
    <property type="entry name" value="PRK05758.2-2"/>
    <property type="match status" value="1"/>
</dbReference>
<dbReference type="NCBIfam" id="NF004406">
    <property type="entry name" value="PRK05758.3-2"/>
    <property type="match status" value="1"/>
</dbReference>
<dbReference type="PANTHER" id="PTHR11910">
    <property type="entry name" value="ATP SYNTHASE DELTA CHAIN"/>
    <property type="match status" value="1"/>
</dbReference>
<dbReference type="Pfam" id="PF00213">
    <property type="entry name" value="OSCP"/>
    <property type="match status" value="1"/>
</dbReference>
<dbReference type="PRINTS" id="PR00125">
    <property type="entry name" value="ATPASEDELTA"/>
</dbReference>
<dbReference type="SUPFAM" id="SSF47928">
    <property type="entry name" value="N-terminal domain of the delta subunit of the F1F0-ATP synthase"/>
    <property type="match status" value="1"/>
</dbReference>
<dbReference type="PROSITE" id="PS00389">
    <property type="entry name" value="ATPASE_DELTA"/>
    <property type="match status" value="1"/>
</dbReference>
<accession>Q1MAY9</accession>
<reference key="1">
    <citation type="journal article" date="2006" name="Genome Biol.">
        <title>The genome of Rhizobium leguminosarum has recognizable core and accessory components.</title>
        <authorList>
            <person name="Young J.P.W."/>
            <person name="Crossman L.C."/>
            <person name="Johnston A.W.B."/>
            <person name="Thomson N.R."/>
            <person name="Ghazoui Z.F."/>
            <person name="Hull K.H."/>
            <person name="Wexler M."/>
            <person name="Curson A.R.J."/>
            <person name="Todd J.D."/>
            <person name="Poole P.S."/>
            <person name="Mauchline T.H."/>
            <person name="East A.K."/>
            <person name="Quail M.A."/>
            <person name="Churcher C."/>
            <person name="Arrowsmith C."/>
            <person name="Cherevach I."/>
            <person name="Chillingworth T."/>
            <person name="Clarke K."/>
            <person name="Cronin A."/>
            <person name="Davis P."/>
            <person name="Fraser A."/>
            <person name="Hance Z."/>
            <person name="Hauser H."/>
            <person name="Jagels K."/>
            <person name="Moule S."/>
            <person name="Mungall K."/>
            <person name="Norbertczak H."/>
            <person name="Rabbinowitsch E."/>
            <person name="Sanders M."/>
            <person name="Simmonds M."/>
            <person name="Whitehead S."/>
            <person name="Parkhill J."/>
        </authorList>
    </citation>
    <scope>NUCLEOTIDE SEQUENCE [LARGE SCALE GENOMIC DNA]</scope>
    <source>
        <strain>DSM 114642 / LMG 32736 / 3841</strain>
    </source>
</reference>